<comment type="function">
    <text evidence="1">One of the primary rRNA binding proteins. Required for association of the 30S and 50S subunits to form the 70S ribosome, for tRNA binding and peptide bond formation. It has been suggested to have peptidyltransferase activity; this is somewhat controversial. Makes several contacts with the 16S rRNA in the 70S ribosome.</text>
</comment>
<comment type="subunit">
    <text evidence="1">Part of the 50S ribosomal subunit. Forms a bridge to the 30S subunit in the 70S ribosome.</text>
</comment>
<comment type="similarity">
    <text evidence="1">Belongs to the universal ribosomal protein uL2 family.</text>
</comment>
<name>RL2_STAAC</name>
<organism>
    <name type="scientific">Staphylococcus aureus (strain COL)</name>
    <dbReference type="NCBI Taxonomy" id="93062"/>
    <lineage>
        <taxon>Bacteria</taxon>
        <taxon>Bacillati</taxon>
        <taxon>Bacillota</taxon>
        <taxon>Bacilli</taxon>
        <taxon>Bacillales</taxon>
        <taxon>Staphylococcaceae</taxon>
        <taxon>Staphylococcus</taxon>
    </lineage>
</organism>
<gene>
    <name evidence="1" type="primary">rplB</name>
    <name type="ordered locus">SACOL2236</name>
</gene>
<evidence type="ECO:0000255" key="1">
    <source>
        <dbReference type="HAMAP-Rule" id="MF_01320"/>
    </source>
</evidence>
<evidence type="ECO:0000256" key="2">
    <source>
        <dbReference type="SAM" id="MobiDB-lite"/>
    </source>
</evidence>
<evidence type="ECO:0000305" key="3"/>
<protein>
    <recommendedName>
        <fullName evidence="1">Large ribosomal subunit protein uL2</fullName>
    </recommendedName>
    <alternativeName>
        <fullName evidence="3">50S ribosomal protein L2</fullName>
    </alternativeName>
</protein>
<accession>Q5HDW1</accession>
<sequence>MAIKKYKPITNGRRNMTSLDFAEITKTTPEKSLLKPLPKKAGRNNQGKLTVRHHGGGHKRQYRVIDFKRNKDGINAKVDSIQYDPNRSANIALVVYADGEKRYIIAPKGLEVGQIVESGAEADIKVGNALPLQNIPVGTVVHNIELKPGKGGQIARSAGASAQVLGKEGKYVLIRLRSGEVRMILSTCRATIGQVGNLQHELVNVGKAGRSRWKGIRPTVRGSVMNPNDHPHGGGEGRAPIGRPSPMSPWGKPTLGKKTRRGKKSSDKLIVRGRKKK</sequence>
<reference key="1">
    <citation type="journal article" date="2005" name="J. Bacteriol.">
        <title>Insights on evolution of virulence and resistance from the complete genome analysis of an early methicillin-resistant Staphylococcus aureus strain and a biofilm-producing methicillin-resistant Staphylococcus epidermidis strain.</title>
        <authorList>
            <person name="Gill S.R."/>
            <person name="Fouts D.E."/>
            <person name="Archer G.L."/>
            <person name="Mongodin E.F."/>
            <person name="DeBoy R.T."/>
            <person name="Ravel J."/>
            <person name="Paulsen I.T."/>
            <person name="Kolonay J.F."/>
            <person name="Brinkac L.M."/>
            <person name="Beanan M.J."/>
            <person name="Dodson R.J."/>
            <person name="Daugherty S.C."/>
            <person name="Madupu R."/>
            <person name="Angiuoli S.V."/>
            <person name="Durkin A.S."/>
            <person name="Haft D.H."/>
            <person name="Vamathevan J.J."/>
            <person name="Khouri H."/>
            <person name="Utterback T.R."/>
            <person name="Lee C."/>
            <person name="Dimitrov G."/>
            <person name="Jiang L."/>
            <person name="Qin H."/>
            <person name="Weidman J."/>
            <person name="Tran K."/>
            <person name="Kang K.H."/>
            <person name="Hance I.R."/>
            <person name="Nelson K.E."/>
            <person name="Fraser C.M."/>
        </authorList>
    </citation>
    <scope>NUCLEOTIDE SEQUENCE [LARGE SCALE GENOMIC DNA]</scope>
    <source>
        <strain>COL</strain>
    </source>
</reference>
<dbReference type="EMBL" id="CP000046">
    <property type="protein sequence ID" value="AAW37111.1"/>
    <property type="molecule type" value="Genomic_DNA"/>
</dbReference>
<dbReference type="RefSeq" id="WP_000985472.1">
    <property type="nucleotide sequence ID" value="NZ_JBGOFO010000004.1"/>
</dbReference>
<dbReference type="SMR" id="Q5HDW1"/>
<dbReference type="GeneID" id="98346559"/>
<dbReference type="KEGG" id="sac:SACOL2236"/>
<dbReference type="HOGENOM" id="CLU_036235_2_1_9"/>
<dbReference type="Proteomes" id="UP000000530">
    <property type="component" value="Chromosome"/>
</dbReference>
<dbReference type="GO" id="GO:0015934">
    <property type="term" value="C:large ribosomal subunit"/>
    <property type="evidence" value="ECO:0007669"/>
    <property type="project" value="InterPro"/>
</dbReference>
<dbReference type="GO" id="GO:0019843">
    <property type="term" value="F:rRNA binding"/>
    <property type="evidence" value="ECO:0007669"/>
    <property type="project" value="UniProtKB-UniRule"/>
</dbReference>
<dbReference type="GO" id="GO:0003735">
    <property type="term" value="F:structural constituent of ribosome"/>
    <property type="evidence" value="ECO:0007669"/>
    <property type="project" value="InterPro"/>
</dbReference>
<dbReference type="GO" id="GO:0016740">
    <property type="term" value="F:transferase activity"/>
    <property type="evidence" value="ECO:0007669"/>
    <property type="project" value="InterPro"/>
</dbReference>
<dbReference type="GO" id="GO:0002181">
    <property type="term" value="P:cytoplasmic translation"/>
    <property type="evidence" value="ECO:0007669"/>
    <property type="project" value="TreeGrafter"/>
</dbReference>
<dbReference type="FunFam" id="2.30.30.30:FF:000001">
    <property type="entry name" value="50S ribosomal protein L2"/>
    <property type="match status" value="1"/>
</dbReference>
<dbReference type="FunFam" id="2.40.50.140:FF:000003">
    <property type="entry name" value="50S ribosomal protein L2"/>
    <property type="match status" value="1"/>
</dbReference>
<dbReference type="FunFam" id="4.10.950.10:FF:000001">
    <property type="entry name" value="50S ribosomal protein L2"/>
    <property type="match status" value="1"/>
</dbReference>
<dbReference type="Gene3D" id="2.30.30.30">
    <property type="match status" value="1"/>
</dbReference>
<dbReference type="Gene3D" id="2.40.50.140">
    <property type="entry name" value="Nucleic acid-binding proteins"/>
    <property type="match status" value="1"/>
</dbReference>
<dbReference type="Gene3D" id="4.10.950.10">
    <property type="entry name" value="Ribosomal protein L2, domain 3"/>
    <property type="match status" value="1"/>
</dbReference>
<dbReference type="HAMAP" id="MF_01320_B">
    <property type="entry name" value="Ribosomal_uL2_B"/>
    <property type="match status" value="1"/>
</dbReference>
<dbReference type="InterPro" id="IPR012340">
    <property type="entry name" value="NA-bd_OB-fold"/>
</dbReference>
<dbReference type="InterPro" id="IPR014722">
    <property type="entry name" value="Rib_uL2_dom2"/>
</dbReference>
<dbReference type="InterPro" id="IPR002171">
    <property type="entry name" value="Ribosomal_uL2"/>
</dbReference>
<dbReference type="InterPro" id="IPR005880">
    <property type="entry name" value="Ribosomal_uL2_bac/org-type"/>
</dbReference>
<dbReference type="InterPro" id="IPR022669">
    <property type="entry name" value="Ribosomal_uL2_C"/>
</dbReference>
<dbReference type="InterPro" id="IPR022671">
    <property type="entry name" value="Ribosomal_uL2_CS"/>
</dbReference>
<dbReference type="InterPro" id="IPR014726">
    <property type="entry name" value="Ribosomal_uL2_dom3"/>
</dbReference>
<dbReference type="InterPro" id="IPR022666">
    <property type="entry name" value="Ribosomal_uL2_RNA-bd_dom"/>
</dbReference>
<dbReference type="InterPro" id="IPR008991">
    <property type="entry name" value="Translation_prot_SH3-like_sf"/>
</dbReference>
<dbReference type="NCBIfam" id="TIGR01171">
    <property type="entry name" value="rplB_bact"/>
    <property type="match status" value="1"/>
</dbReference>
<dbReference type="PANTHER" id="PTHR13691:SF5">
    <property type="entry name" value="LARGE RIBOSOMAL SUBUNIT PROTEIN UL2M"/>
    <property type="match status" value="1"/>
</dbReference>
<dbReference type="PANTHER" id="PTHR13691">
    <property type="entry name" value="RIBOSOMAL PROTEIN L2"/>
    <property type="match status" value="1"/>
</dbReference>
<dbReference type="Pfam" id="PF00181">
    <property type="entry name" value="Ribosomal_L2"/>
    <property type="match status" value="1"/>
</dbReference>
<dbReference type="Pfam" id="PF03947">
    <property type="entry name" value="Ribosomal_L2_C"/>
    <property type="match status" value="1"/>
</dbReference>
<dbReference type="PIRSF" id="PIRSF002158">
    <property type="entry name" value="Ribosomal_L2"/>
    <property type="match status" value="1"/>
</dbReference>
<dbReference type="SMART" id="SM01383">
    <property type="entry name" value="Ribosomal_L2"/>
    <property type="match status" value="1"/>
</dbReference>
<dbReference type="SMART" id="SM01382">
    <property type="entry name" value="Ribosomal_L2_C"/>
    <property type="match status" value="1"/>
</dbReference>
<dbReference type="SUPFAM" id="SSF50249">
    <property type="entry name" value="Nucleic acid-binding proteins"/>
    <property type="match status" value="1"/>
</dbReference>
<dbReference type="SUPFAM" id="SSF50104">
    <property type="entry name" value="Translation proteins SH3-like domain"/>
    <property type="match status" value="1"/>
</dbReference>
<dbReference type="PROSITE" id="PS00467">
    <property type="entry name" value="RIBOSOMAL_L2"/>
    <property type="match status" value="1"/>
</dbReference>
<feature type="chain" id="PRO_0000129614" description="Large ribosomal subunit protein uL2">
    <location>
        <begin position="1"/>
        <end position="277"/>
    </location>
</feature>
<feature type="region of interest" description="Disordered" evidence="2">
    <location>
        <begin position="36"/>
        <end position="55"/>
    </location>
</feature>
<feature type="region of interest" description="Disordered" evidence="2">
    <location>
        <begin position="213"/>
        <end position="277"/>
    </location>
</feature>
<keyword id="KW-0687">Ribonucleoprotein</keyword>
<keyword id="KW-0689">Ribosomal protein</keyword>
<keyword id="KW-0694">RNA-binding</keyword>
<keyword id="KW-0699">rRNA-binding</keyword>
<proteinExistence type="inferred from homology"/>